<reference key="1">
    <citation type="journal article" date="2008" name="J. Bacteriol.">
        <title>Complete genome sequence of the mosquitocidal bacterium Bacillus sphaericus C3-41 and comparison with those of closely related Bacillus species.</title>
        <authorList>
            <person name="Hu X."/>
            <person name="Fan W."/>
            <person name="Han B."/>
            <person name="Liu H."/>
            <person name="Zheng D."/>
            <person name="Li Q."/>
            <person name="Dong W."/>
            <person name="Yan J."/>
            <person name="Gao M."/>
            <person name="Berry C."/>
            <person name="Yuan Z."/>
        </authorList>
    </citation>
    <scope>NUCLEOTIDE SEQUENCE [LARGE SCALE GENOMIC DNA]</scope>
    <source>
        <strain>C3-41</strain>
    </source>
</reference>
<comment type="function">
    <text evidence="1">Catalyzes the 2-thiolation of uridine at the wobble position (U34) of tRNA, leading to the formation of s(2)U34.</text>
</comment>
<comment type="catalytic activity">
    <reaction evidence="1">
        <text>S-sulfanyl-L-cysteinyl-[protein] + uridine(34) in tRNA + AH2 + ATP = 2-thiouridine(34) in tRNA + L-cysteinyl-[protein] + A + AMP + diphosphate + H(+)</text>
        <dbReference type="Rhea" id="RHEA:47032"/>
        <dbReference type="Rhea" id="RHEA-COMP:10131"/>
        <dbReference type="Rhea" id="RHEA-COMP:11726"/>
        <dbReference type="Rhea" id="RHEA-COMP:11727"/>
        <dbReference type="Rhea" id="RHEA-COMP:11728"/>
        <dbReference type="ChEBI" id="CHEBI:13193"/>
        <dbReference type="ChEBI" id="CHEBI:15378"/>
        <dbReference type="ChEBI" id="CHEBI:17499"/>
        <dbReference type="ChEBI" id="CHEBI:29950"/>
        <dbReference type="ChEBI" id="CHEBI:30616"/>
        <dbReference type="ChEBI" id="CHEBI:33019"/>
        <dbReference type="ChEBI" id="CHEBI:61963"/>
        <dbReference type="ChEBI" id="CHEBI:65315"/>
        <dbReference type="ChEBI" id="CHEBI:87170"/>
        <dbReference type="ChEBI" id="CHEBI:456215"/>
        <dbReference type="EC" id="2.8.1.13"/>
    </reaction>
</comment>
<comment type="subcellular location">
    <subcellularLocation>
        <location evidence="1">Cytoplasm</location>
    </subcellularLocation>
</comment>
<comment type="similarity">
    <text evidence="1">Belongs to the MnmA/TRMU family.</text>
</comment>
<feature type="chain" id="PRO_0000349687" description="tRNA-specific 2-thiouridylase MnmA">
    <location>
        <begin position="1"/>
        <end position="374"/>
    </location>
</feature>
<feature type="region of interest" description="Interaction with target base in tRNA" evidence="1">
    <location>
        <begin position="101"/>
        <end position="103"/>
    </location>
</feature>
<feature type="region of interest" description="Interaction with tRNA" evidence="1">
    <location>
        <begin position="153"/>
        <end position="155"/>
    </location>
</feature>
<feature type="region of interest" description="Interaction with tRNA" evidence="1">
    <location>
        <begin position="311"/>
        <end position="312"/>
    </location>
</feature>
<feature type="active site" description="Nucleophile" evidence="1">
    <location>
        <position position="106"/>
    </location>
</feature>
<feature type="active site" description="Cysteine persulfide intermediate" evidence="1">
    <location>
        <position position="203"/>
    </location>
</feature>
<feature type="binding site" evidence="1">
    <location>
        <begin position="15"/>
        <end position="22"/>
    </location>
    <ligand>
        <name>ATP</name>
        <dbReference type="ChEBI" id="CHEBI:30616"/>
    </ligand>
</feature>
<feature type="binding site" evidence="1">
    <location>
        <position position="41"/>
    </location>
    <ligand>
        <name>ATP</name>
        <dbReference type="ChEBI" id="CHEBI:30616"/>
    </ligand>
</feature>
<feature type="binding site" evidence="1">
    <location>
        <position position="130"/>
    </location>
    <ligand>
        <name>ATP</name>
        <dbReference type="ChEBI" id="CHEBI:30616"/>
    </ligand>
</feature>
<feature type="site" description="Interaction with tRNA" evidence="1">
    <location>
        <position position="131"/>
    </location>
</feature>
<feature type="site" description="Interaction with tRNA" evidence="1">
    <location>
        <position position="344"/>
    </location>
</feature>
<feature type="disulfide bond" description="Alternate" evidence="1">
    <location>
        <begin position="106"/>
        <end position="203"/>
    </location>
</feature>
<name>MNMA_LYSSC</name>
<dbReference type="EC" id="2.8.1.13" evidence="1"/>
<dbReference type="EMBL" id="CP000817">
    <property type="protein sequence ID" value="ACA41358.1"/>
    <property type="molecule type" value="Genomic_DNA"/>
</dbReference>
<dbReference type="RefSeq" id="WP_012295404.1">
    <property type="nucleotide sequence ID" value="NC_010382.1"/>
</dbReference>
<dbReference type="SMR" id="B1HUL3"/>
<dbReference type="EnsemblBacteria" id="ACA41358">
    <property type="protein sequence ID" value="ACA41358"/>
    <property type="gene ID" value="Bsph_3882"/>
</dbReference>
<dbReference type="KEGG" id="lsp:Bsph_3882"/>
<dbReference type="HOGENOM" id="CLU_035188_1_0_9"/>
<dbReference type="Proteomes" id="UP000002164">
    <property type="component" value="Chromosome"/>
</dbReference>
<dbReference type="GO" id="GO:0005737">
    <property type="term" value="C:cytoplasm"/>
    <property type="evidence" value="ECO:0007669"/>
    <property type="project" value="UniProtKB-SubCell"/>
</dbReference>
<dbReference type="GO" id="GO:0005524">
    <property type="term" value="F:ATP binding"/>
    <property type="evidence" value="ECO:0007669"/>
    <property type="project" value="UniProtKB-KW"/>
</dbReference>
<dbReference type="GO" id="GO:0000049">
    <property type="term" value="F:tRNA binding"/>
    <property type="evidence" value="ECO:0007669"/>
    <property type="project" value="UniProtKB-KW"/>
</dbReference>
<dbReference type="GO" id="GO:0103016">
    <property type="term" value="F:tRNA-uridine 2-sulfurtransferase activity"/>
    <property type="evidence" value="ECO:0007669"/>
    <property type="project" value="UniProtKB-EC"/>
</dbReference>
<dbReference type="GO" id="GO:0002143">
    <property type="term" value="P:tRNA wobble position uridine thiolation"/>
    <property type="evidence" value="ECO:0007669"/>
    <property type="project" value="TreeGrafter"/>
</dbReference>
<dbReference type="CDD" id="cd01998">
    <property type="entry name" value="MnmA_TRMU-like"/>
    <property type="match status" value="1"/>
</dbReference>
<dbReference type="FunFam" id="2.30.30.280:FF:000001">
    <property type="entry name" value="tRNA-specific 2-thiouridylase MnmA"/>
    <property type="match status" value="1"/>
</dbReference>
<dbReference type="FunFam" id="2.40.30.10:FF:000023">
    <property type="entry name" value="tRNA-specific 2-thiouridylase MnmA"/>
    <property type="match status" value="1"/>
</dbReference>
<dbReference type="FunFam" id="3.40.50.620:FF:000004">
    <property type="entry name" value="tRNA-specific 2-thiouridylase MnmA"/>
    <property type="match status" value="1"/>
</dbReference>
<dbReference type="Gene3D" id="2.30.30.280">
    <property type="entry name" value="Adenine nucleotide alpha hydrolases-like domains"/>
    <property type="match status" value="1"/>
</dbReference>
<dbReference type="Gene3D" id="3.40.50.620">
    <property type="entry name" value="HUPs"/>
    <property type="match status" value="1"/>
</dbReference>
<dbReference type="Gene3D" id="2.40.30.10">
    <property type="entry name" value="Translation factors"/>
    <property type="match status" value="1"/>
</dbReference>
<dbReference type="HAMAP" id="MF_00144">
    <property type="entry name" value="tRNA_thiouridyl_MnmA"/>
    <property type="match status" value="1"/>
</dbReference>
<dbReference type="InterPro" id="IPR004506">
    <property type="entry name" value="MnmA-like"/>
</dbReference>
<dbReference type="InterPro" id="IPR046885">
    <property type="entry name" value="MnmA-like_C"/>
</dbReference>
<dbReference type="InterPro" id="IPR046884">
    <property type="entry name" value="MnmA-like_central"/>
</dbReference>
<dbReference type="InterPro" id="IPR023382">
    <property type="entry name" value="MnmA-like_central_sf"/>
</dbReference>
<dbReference type="InterPro" id="IPR014729">
    <property type="entry name" value="Rossmann-like_a/b/a_fold"/>
</dbReference>
<dbReference type="NCBIfam" id="NF001138">
    <property type="entry name" value="PRK00143.1"/>
    <property type="match status" value="1"/>
</dbReference>
<dbReference type="NCBIfam" id="TIGR00420">
    <property type="entry name" value="trmU"/>
    <property type="match status" value="1"/>
</dbReference>
<dbReference type="PANTHER" id="PTHR11933:SF5">
    <property type="entry name" value="MITOCHONDRIAL TRNA-SPECIFIC 2-THIOURIDYLASE 1"/>
    <property type="match status" value="1"/>
</dbReference>
<dbReference type="PANTHER" id="PTHR11933">
    <property type="entry name" value="TRNA 5-METHYLAMINOMETHYL-2-THIOURIDYLATE -METHYLTRANSFERASE"/>
    <property type="match status" value="1"/>
</dbReference>
<dbReference type="Pfam" id="PF03054">
    <property type="entry name" value="tRNA_Me_trans"/>
    <property type="match status" value="1"/>
</dbReference>
<dbReference type="Pfam" id="PF20258">
    <property type="entry name" value="tRNA_Me_trans_C"/>
    <property type="match status" value="1"/>
</dbReference>
<dbReference type="Pfam" id="PF20259">
    <property type="entry name" value="tRNA_Me_trans_M"/>
    <property type="match status" value="1"/>
</dbReference>
<dbReference type="SUPFAM" id="SSF52402">
    <property type="entry name" value="Adenine nucleotide alpha hydrolases-like"/>
    <property type="match status" value="1"/>
</dbReference>
<sequence>MKETRDPSQIRVVVGMSGGVDSSVAAYLLKQQGYEVIGIFMKNWDDTDENGVCTATEDYDDVIKVCNQIGIPYYAVNFEKQYWDKVFTYFLEEYKAGRTPNPDVMCNKEIKFKAFLEHAMSLGADYLATGHYARIDRSGDGEVKMLRGVDNNKDQTYFLNQLSQEQLAHVMFPIGDIEKKEVRKIAEEAGLATAKKKDSTGICFIGERNFKEFLSQFLPAQPGNMETMDGVVMGKHDGLMYYTLGQRHGLGIGGDGEPWFVLGKDLERNVLLVGQGFDNEHLYSTSLSAVKMNYTSTKKLPGKFSCTAKFRYRQTDTPVEVELLADGRTHITFAEPVRAITPGQAVVLYDGEECIGGGTIDEVFKSNEKLTYVG</sequence>
<accession>B1HUL3</accession>
<evidence type="ECO:0000255" key="1">
    <source>
        <dbReference type="HAMAP-Rule" id="MF_00144"/>
    </source>
</evidence>
<organism>
    <name type="scientific">Lysinibacillus sphaericus (strain C3-41)</name>
    <dbReference type="NCBI Taxonomy" id="444177"/>
    <lineage>
        <taxon>Bacteria</taxon>
        <taxon>Bacillati</taxon>
        <taxon>Bacillota</taxon>
        <taxon>Bacilli</taxon>
        <taxon>Bacillales</taxon>
        <taxon>Bacillaceae</taxon>
        <taxon>Lysinibacillus</taxon>
    </lineage>
</organism>
<proteinExistence type="inferred from homology"/>
<keyword id="KW-0067">ATP-binding</keyword>
<keyword id="KW-0963">Cytoplasm</keyword>
<keyword id="KW-1015">Disulfide bond</keyword>
<keyword id="KW-0547">Nucleotide-binding</keyword>
<keyword id="KW-0694">RNA-binding</keyword>
<keyword id="KW-0808">Transferase</keyword>
<keyword id="KW-0819">tRNA processing</keyword>
<keyword id="KW-0820">tRNA-binding</keyword>
<protein>
    <recommendedName>
        <fullName evidence="1">tRNA-specific 2-thiouridylase MnmA</fullName>
        <ecNumber evidence="1">2.8.1.13</ecNumber>
    </recommendedName>
</protein>
<gene>
    <name evidence="1" type="primary">mnmA</name>
    <name type="ordered locus">Bsph_3882</name>
</gene>